<gene>
    <name type="primary">59</name>
</gene>
<organismHost>
    <name type="scientific">Mycobacterium</name>
    <dbReference type="NCBI Taxonomy" id="1763"/>
</organismHost>
<accession>Q05272</accession>
<organism>
    <name type="scientific">Mycobacterium phage L5</name>
    <name type="common">Mycobacteriophage L5</name>
    <dbReference type="NCBI Taxonomy" id="31757"/>
    <lineage>
        <taxon>Viruses</taxon>
        <taxon>Duplodnaviria</taxon>
        <taxon>Heunggongvirae</taxon>
        <taxon>Uroviricota</taxon>
        <taxon>Caudoviricetes</taxon>
        <taxon>Fromanvirus</taxon>
    </lineage>
</organism>
<keyword id="KW-1185">Reference proteome</keyword>
<proteinExistence type="predicted"/>
<dbReference type="EMBL" id="Z18946">
    <property type="protein sequence ID" value="CAA79435.1"/>
    <property type="molecule type" value="Genomic_DNA"/>
</dbReference>
<dbReference type="PIR" id="S31004">
    <property type="entry name" value="S31004"/>
</dbReference>
<dbReference type="RefSeq" id="NP_039723.1">
    <property type="nucleotide sequence ID" value="NC_001335.1"/>
</dbReference>
<dbReference type="GeneID" id="2942917"/>
<dbReference type="KEGG" id="vg:2942917"/>
<dbReference type="OrthoDB" id="27676at10239"/>
<dbReference type="Proteomes" id="UP000002123">
    <property type="component" value="Genome"/>
</dbReference>
<dbReference type="Gene3D" id="3.40.1800.10">
    <property type="entry name" value="His-Me finger endonucleases"/>
    <property type="match status" value="1"/>
</dbReference>
<dbReference type="InterPro" id="IPR004211">
    <property type="entry name" value="Endonuclease_7"/>
</dbReference>
<dbReference type="InterPro" id="IPR038563">
    <property type="entry name" value="Endonuclease_7_sf"/>
</dbReference>
<dbReference type="InterPro" id="IPR044925">
    <property type="entry name" value="His-Me_finger_sf"/>
</dbReference>
<dbReference type="Pfam" id="PF02945">
    <property type="entry name" value="Endonuclease_7"/>
    <property type="match status" value="1"/>
</dbReference>
<dbReference type="SUPFAM" id="SSF54060">
    <property type="entry name" value="His-Me finger endonucleases"/>
    <property type="match status" value="1"/>
</dbReference>
<reference key="1">
    <citation type="journal article" date="1993" name="Mol. Microbiol.">
        <title>DNA sequence, structure and gene expression of mycobacteriophage L5: a phage system for mycobacterial genetics.</title>
        <authorList>
            <person name="Hatfull G.F."/>
            <person name="Sarkis G.J."/>
        </authorList>
    </citation>
    <scope>NUCLEOTIDE SEQUENCE [LARGE SCALE GENOMIC DNA]</scope>
</reference>
<feature type="chain" id="PRO_0000164793" description="Gene 59 protein">
    <location>
        <begin position="1"/>
        <end position="164"/>
    </location>
</feature>
<name>VG59_BPML5</name>
<protein>
    <recommendedName>
        <fullName>Gene 59 protein</fullName>
    </recommendedName>
    <alternativeName>
        <fullName>Gp59</fullName>
    </alternativeName>
</protein>
<sequence>MPRAAKRSPGYRVQNRKHKRKPCKDCVAQGLPLTRDAKYPGPRCATHHREFRTARSSTSWETRILATYGITGDEYWQIYEFQGGRCYICQRANGKKKRLSVDHDHKTGIVRGLLCTMCNKYTLGWARDCIEFFKRAIEYLLNPPAVQVIGERIAPVEADKLSRT</sequence>